<sequence length="685" mass="78501">MNLNKNNNSVEDSVSSDLIDLECTFESMGLDNRILRALKKMGFQNPSLVQSKSIPLSLQGKDILAKARTGSGKTAAYSIPIIQKVLMAKEKSNIKGVKAVVLVPTRELCEQVKNHFNQVSYYCQQLVSVVQLGNDKTLDEQKGLLRDIPDVIVSTPTRLVQHLENKTIQLQSTLDILVIDEADLVLNYGHQNDINIIKSFLPKVCQCFLMSATLTKEVEELKKLVLHTPAVLKLEEDKAIQTNLSEYSIKCAEVDKFLLVFSLLRLRLMQGKILFFVNDTNNCYKLKLFFERFHIKCAVLNSELPINSRHDIILQFNKGLFDYLIATDESFKSDSNKKEEQELEDNENEDDDDDDDEMTDVKKEDDEENEDEEENDEENEEDEENEEDEEDEENEEDDDEEENEEDDDKKNKNKKINNSKGDKEYGVARGIDFRNVDIVVNFDFPRTIKNYIHRIGRTARGTNKGIALSFVTYHNEELLKKVSKTRGDAGYNLKPFEFKMNAIEGFRYRVEDVLRTIGIRAIKEAKKTELKQELLNNEKLKSHFSENPQDLLALKHDTTLIKKQVPLHLRVVPEYLLPTQFKNHADQKLEIIPSRPQSGHHGTTGRSLGVNKKLEQKKRKKDILKTLSIKKNTTLTGEELAQARSKSLIKRLKIKEGNISADGSYKTVKVQKKGANNNRRKLIVD</sequence>
<dbReference type="EC" id="3.6.4.13"/>
<dbReference type="EMBL" id="AAFI02000036">
    <property type="protein sequence ID" value="EAL67182.1"/>
    <property type="molecule type" value="Genomic_DNA"/>
</dbReference>
<dbReference type="RefSeq" id="XP_641158.1">
    <property type="nucleotide sequence ID" value="XM_636066.1"/>
</dbReference>
<dbReference type="SMR" id="Q54VF1"/>
<dbReference type="FunCoup" id="Q54VF1">
    <property type="interactions" value="741"/>
</dbReference>
<dbReference type="STRING" id="44689.Q54VF1"/>
<dbReference type="PaxDb" id="44689-DDB0234216"/>
<dbReference type="EnsemblProtists" id="EAL67182">
    <property type="protein sequence ID" value="EAL67182"/>
    <property type="gene ID" value="DDB_G0280407"/>
</dbReference>
<dbReference type="GeneID" id="8622538"/>
<dbReference type="KEGG" id="ddi:DDB_G0280407"/>
<dbReference type="dictyBase" id="DDB_G0280407">
    <property type="gene designation" value="ddx56"/>
</dbReference>
<dbReference type="VEuPathDB" id="AmoebaDB:DDB_G0280407"/>
<dbReference type="eggNOG" id="KOG0346">
    <property type="taxonomic scope" value="Eukaryota"/>
</dbReference>
<dbReference type="HOGENOM" id="CLU_003041_17_1_1"/>
<dbReference type="InParanoid" id="Q54VF1"/>
<dbReference type="OMA" id="NASEQCV"/>
<dbReference type="PhylomeDB" id="Q54VF1"/>
<dbReference type="PRO" id="PR:Q54VF1"/>
<dbReference type="Proteomes" id="UP000002195">
    <property type="component" value="Chromosome 3"/>
</dbReference>
<dbReference type="GO" id="GO:0005730">
    <property type="term" value="C:nucleolus"/>
    <property type="evidence" value="ECO:0000250"/>
    <property type="project" value="dictyBase"/>
</dbReference>
<dbReference type="GO" id="GO:0005524">
    <property type="term" value="F:ATP binding"/>
    <property type="evidence" value="ECO:0007669"/>
    <property type="project" value="UniProtKB-KW"/>
</dbReference>
<dbReference type="GO" id="GO:0016887">
    <property type="term" value="F:ATP hydrolysis activity"/>
    <property type="evidence" value="ECO:0007669"/>
    <property type="project" value="RHEA"/>
</dbReference>
<dbReference type="GO" id="GO:0003723">
    <property type="term" value="F:RNA binding"/>
    <property type="evidence" value="ECO:0007669"/>
    <property type="project" value="UniProtKB-KW"/>
</dbReference>
<dbReference type="GO" id="GO:0003724">
    <property type="term" value="F:RNA helicase activity"/>
    <property type="evidence" value="ECO:0007669"/>
    <property type="project" value="UniProtKB-EC"/>
</dbReference>
<dbReference type="GO" id="GO:0006364">
    <property type="term" value="P:rRNA processing"/>
    <property type="evidence" value="ECO:0000250"/>
    <property type="project" value="dictyBase"/>
</dbReference>
<dbReference type="CDD" id="cd17961">
    <property type="entry name" value="DEADc_DDX56"/>
    <property type="match status" value="1"/>
</dbReference>
<dbReference type="CDD" id="cd18787">
    <property type="entry name" value="SF2_C_DEAD"/>
    <property type="match status" value="1"/>
</dbReference>
<dbReference type="FunFam" id="3.40.50.300:FF:000939">
    <property type="entry name" value="Probable ATP-dependent RNA helicase DDX56"/>
    <property type="match status" value="1"/>
</dbReference>
<dbReference type="Gene3D" id="3.40.50.300">
    <property type="entry name" value="P-loop containing nucleotide triphosphate hydrolases"/>
    <property type="match status" value="2"/>
</dbReference>
<dbReference type="InterPro" id="IPR011545">
    <property type="entry name" value="DEAD/DEAH_box_helicase_dom"/>
</dbReference>
<dbReference type="InterPro" id="IPR050079">
    <property type="entry name" value="DEAD_box_RNA_helicase"/>
</dbReference>
<dbReference type="InterPro" id="IPR014001">
    <property type="entry name" value="Helicase_ATP-bd"/>
</dbReference>
<dbReference type="InterPro" id="IPR001650">
    <property type="entry name" value="Helicase_C-like"/>
</dbReference>
<dbReference type="InterPro" id="IPR027417">
    <property type="entry name" value="P-loop_NTPase"/>
</dbReference>
<dbReference type="InterPro" id="IPR014014">
    <property type="entry name" value="RNA_helicase_DEAD_Q_motif"/>
</dbReference>
<dbReference type="PANTHER" id="PTHR47959">
    <property type="entry name" value="ATP-DEPENDENT RNA HELICASE RHLE-RELATED"/>
    <property type="match status" value="1"/>
</dbReference>
<dbReference type="PANTHER" id="PTHR47959:SF21">
    <property type="entry name" value="DEAD-BOX HELICASE 56"/>
    <property type="match status" value="1"/>
</dbReference>
<dbReference type="Pfam" id="PF00270">
    <property type="entry name" value="DEAD"/>
    <property type="match status" value="1"/>
</dbReference>
<dbReference type="Pfam" id="PF00271">
    <property type="entry name" value="Helicase_C"/>
    <property type="match status" value="2"/>
</dbReference>
<dbReference type="SMART" id="SM00487">
    <property type="entry name" value="DEXDc"/>
    <property type="match status" value="1"/>
</dbReference>
<dbReference type="SMART" id="SM00490">
    <property type="entry name" value="HELICc"/>
    <property type="match status" value="1"/>
</dbReference>
<dbReference type="SUPFAM" id="SSF52540">
    <property type="entry name" value="P-loop containing nucleoside triphosphate hydrolases"/>
    <property type="match status" value="2"/>
</dbReference>
<dbReference type="PROSITE" id="PS51192">
    <property type="entry name" value="HELICASE_ATP_BIND_1"/>
    <property type="match status" value="1"/>
</dbReference>
<dbReference type="PROSITE" id="PS51194">
    <property type="entry name" value="HELICASE_CTER"/>
    <property type="match status" value="1"/>
</dbReference>
<dbReference type="PROSITE" id="PS51195">
    <property type="entry name" value="Q_MOTIF"/>
    <property type="match status" value="1"/>
</dbReference>
<keyword id="KW-0067">ATP-binding</keyword>
<keyword id="KW-0347">Helicase</keyword>
<keyword id="KW-0378">Hydrolase</keyword>
<keyword id="KW-0547">Nucleotide-binding</keyword>
<keyword id="KW-0539">Nucleus</keyword>
<keyword id="KW-0597">Phosphoprotein</keyword>
<keyword id="KW-1185">Reference proteome</keyword>
<keyword id="KW-0690">Ribosome biogenesis</keyword>
<keyword id="KW-0694">RNA-binding</keyword>
<keyword id="KW-0698">rRNA processing</keyword>
<protein>
    <recommendedName>
        <fullName>Probable ATP-dependent RNA helicase ddx56</fullName>
        <ecNumber>3.6.4.13</ecNumber>
    </recommendedName>
    <alternativeName>
        <fullName>DEAD box protein 56</fullName>
    </alternativeName>
</protein>
<proteinExistence type="inferred from homology"/>
<gene>
    <name type="primary">ddx56</name>
    <name type="ORF">DDB_G0280407</name>
</gene>
<organism>
    <name type="scientific">Dictyostelium discoideum</name>
    <name type="common">Social amoeba</name>
    <dbReference type="NCBI Taxonomy" id="44689"/>
    <lineage>
        <taxon>Eukaryota</taxon>
        <taxon>Amoebozoa</taxon>
        <taxon>Evosea</taxon>
        <taxon>Eumycetozoa</taxon>
        <taxon>Dictyostelia</taxon>
        <taxon>Dictyosteliales</taxon>
        <taxon>Dictyosteliaceae</taxon>
        <taxon>Dictyostelium</taxon>
    </lineage>
</organism>
<comment type="function">
    <text evidence="1">May play a role in later stages of the processing of the pre-ribosomal particles leading to mature 60S ribosomal subunits.</text>
</comment>
<comment type="catalytic activity">
    <reaction>
        <text>ATP + H2O = ADP + phosphate + H(+)</text>
        <dbReference type="Rhea" id="RHEA:13065"/>
        <dbReference type="ChEBI" id="CHEBI:15377"/>
        <dbReference type="ChEBI" id="CHEBI:15378"/>
        <dbReference type="ChEBI" id="CHEBI:30616"/>
        <dbReference type="ChEBI" id="CHEBI:43474"/>
        <dbReference type="ChEBI" id="CHEBI:456216"/>
        <dbReference type="EC" id="3.6.4.13"/>
    </reaction>
</comment>
<comment type="subcellular location">
    <subcellularLocation>
        <location evidence="1">Nucleus</location>
        <location evidence="1">Nucleolus</location>
    </subcellularLocation>
</comment>
<comment type="similarity">
    <text evidence="5">Belongs to the DEAD box helicase family. DDX56/DBP9 subfamily.</text>
</comment>
<feature type="chain" id="PRO_0000327823" description="Probable ATP-dependent RNA helicase ddx56">
    <location>
        <begin position="1"/>
        <end position="685"/>
    </location>
</feature>
<feature type="domain" description="Helicase ATP-binding" evidence="2">
    <location>
        <begin position="54"/>
        <end position="232"/>
    </location>
</feature>
<feature type="domain" description="Helicase C-terminal" evidence="3">
    <location>
        <begin position="351"/>
        <end position="504"/>
    </location>
</feature>
<feature type="region of interest" description="Disordered" evidence="4">
    <location>
        <begin position="332"/>
        <end position="423"/>
    </location>
</feature>
<feature type="region of interest" description="Disordered" evidence="4">
    <location>
        <begin position="593"/>
        <end position="617"/>
    </location>
</feature>
<feature type="short sequence motif" description="Q motif">
    <location>
        <begin position="23"/>
        <end position="51"/>
    </location>
</feature>
<feature type="short sequence motif" description="DEAD box">
    <location>
        <begin position="180"/>
        <end position="183"/>
    </location>
</feature>
<feature type="compositionally biased region" description="Acidic residues" evidence="4">
    <location>
        <begin position="341"/>
        <end position="358"/>
    </location>
</feature>
<feature type="compositionally biased region" description="Acidic residues" evidence="4">
    <location>
        <begin position="365"/>
        <end position="407"/>
    </location>
</feature>
<feature type="compositionally biased region" description="Polar residues" evidence="4">
    <location>
        <begin position="595"/>
        <end position="606"/>
    </location>
</feature>
<feature type="binding site" evidence="2">
    <location>
        <begin position="67"/>
        <end position="74"/>
    </location>
    <ligand>
        <name>ATP</name>
        <dbReference type="ChEBI" id="CHEBI:30616"/>
    </ligand>
</feature>
<reference key="1">
    <citation type="journal article" date="2005" name="Nature">
        <title>The genome of the social amoeba Dictyostelium discoideum.</title>
        <authorList>
            <person name="Eichinger L."/>
            <person name="Pachebat J.A."/>
            <person name="Gloeckner G."/>
            <person name="Rajandream M.A."/>
            <person name="Sucgang R."/>
            <person name="Berriman M."/>
            <person name="Song J."/>
            <person name="Olsen R."/>
            <person name="Szafranski K."/>
            <person name="Xu Q."/>
            <person name="Tunggal B."/>
            <person name="Kummerfeld S."/>
            <person name="Madera M."/>
            <person name="Konfortov B.A."/>
            <person name="Rivero F."/>
            <person name="Bankier A.T."/>
            <person name="Lehmann R."/>
            <person name="Hamlin N."/>
            <person name="Davies R."/>
            <person name="Gaudet P."/>
            <person name="Fey P."/>
            <person name="Pilcher K."/>
            <person name="Chen G."/>
            <person name="Saunders D."/>
            <person name="Sodergren E.J."/>
            <person name="Davis P."/>
            <person name="Kerhornou A."/>
            <person name="Nie X."/>
            <person name="Hall N."/>
            <person name="Anjard C."/>
            <person name="Hemphill L."/>
            <person name="Bason N."/>
            <person name="Farbrother P."/>
            <person name="Desany B."/>
            <person name="Just E."/>
            <person name="Morio T."/>
            <person name="Rost R."/>
            <person name="Churcher C.M."/>
            <person name="Cooper J."/>
            <person name="Haydock S."/>
            <person name="van Driessche N."/>
            <person name="Cronin A."/>
            <person name="Goodhead I."/>
            <person name="Muzny D.M."/>
            <person name="Mourier T."/>
            <person name="Pain A."/>
            <person name="Lu M."/>
            <person name="Harper D."/>
            <person name="Lindsay R."/>
            <person name="Hauser H."/>
            <person name="James K.D."/>
            <person name="Quiles M."/>
            <person name="Madan Babu M."/>
            <person name="Saito T."/>
            <person name="Buchrieser C."/>
            <person name="Wardroper A."/>
            <person name="Felder M."/>
            <person name="Thangavelu M."/>
            <person name="Johnson D."/>
            <person name="Knights A."/>
            <person name="Loulseged H."/>
            <person name="Mungall K.L."/>
            <person name="Oliver K."/>
            <person name="Price C."/>
            <person name="Quail M.A."/>
            <person name="Urushihara H."/>
            <person name="Hernandez J."/>
            <person name="Rabbinowitsch E."/>
            <person name="Steffen D."/>
            <person name="Sanders M."/>
            <person name="Ma J."/>
            <person name="Kohara Y."/>
            <person name="Sharp S."/>
            <person name="Simmonds M.N."/>
            <person name="Spiegler S."/>
            <person name="Tivey A."/>
            <person name="Sugano S."/>
            <person name="White B."/>
            <person name="Walker D."/>
            <person name="Woodward J.R."/>
            <person name="Winckler T."/>
            <person name="Tanaka Y."/>
            <person name="Shaulsky G."/>
            <person name="Schleicher M."/>
            <person name="Weinstock G.M."/>
            <person name="Rosenthal A."/>
            <person name="Cox E.C."/>
            <person name="Chisholm R.L."/>
            <person name="Gibbs R.A."/>
            <person name="Loomis W.F."/>
            <person name="Platzer M."/>
            <person name="Kay R.R."/>
            <person name="Williams J.G."/>
            <person name="Dear P.H."/>
            <person name="Noegel A.A."/>
            <person name="Barrell B.G."/>
            <person name="Kuspa A."/>
        </authorList>
    </citation>
    <scope>NUCLEOTIDE SEQUENCE [LARGE SCALE GENOMIC DNA]</scope>
    <source>
        <strain>AX4</strain>
    </source>
</reference>
<accession>Q54VF1</accession>
<name>DDX56_DICDI</name>
<evidence type="ECO:0000250" key="1"/>
<evidence type="ECO:0000255" key="2">
    <source>
        <dbReference type="PROSITE-ProRule" id="PRU00541"/>
    </source>
</evidence>
<evidence type="ECO:0000255" key="3">
    <source>
        <dbReference type="PROSITE-ProRule" id="PRU00542"/>
    </source>
</evidence>
<evidence type="ECO:0000256" key="4">
    <source>
        <dbReference type="SAM" id="MobiDB-lite"/>
    </source>
</evidence>
<evidence type="ECO:0000305" key="5"/>